<comment type="subunit">
    <text evidence="1">Component of the mitochondrial ribosome small subunit (28S) which comprises a 12S rRNA and about 30 distinct proteins.</text>
</comment>
<comment type="subcellular location">
    <subcellularLocation>
        <location evidence="1">Mitochondrion</location>
    </subcellularLocation>
</comment>
<comment type="similarity">
    <text evidence="2">Belongs to the universal ribosomal protein uS10 family.</text>
</comment>
<organism>
    <name type="scientific">Danio rerio</name>
    <name type="common">Zebrafish</name>
    <name type="synonym">Brachydanio rerio</name>
    <dbReference type="NCBI Taxonomy" id="7955"/>
    <lineage>
        <taxon>Eukaryota</taxon>
        <taxon>Metazoa</taxon>
        <taxon>Chordata</taxon>
        <taxon>Craniata</taxon>
        <taxon>Vertebrata</taxon>
        <taxon>Euteleostomi</taxon>
        <taxon>Actinopterygii</taxon>
        <taxon>Neopterygii</taxon>
        <taxon>Teleostei</taxon>
        <taxon>Ostariophysi</taxon>
        <taxon>Cypriniformes</taxon>
        <taxon>Danionidae</taxon>
        <taxon>Danioninae</taxon>
        <taxon>Danio</taxon>
    </lineage>
</organism>
<evidence type="ECO:0000250" key="1">
    <source>
        <dbReference type="UniProtKB" id="P82664"/>
    </source>
</evidence>
<evidence type="ECO:0000305" key="2"/>
<name>RT10_DANRE</name>
<keyword id="KW-0496">Mitochondrion</keyword>
<keyword id="KW-1185">Reference proteome</keyword>
<keyword id="KW-0687">Ribonucleoprotein</keyword>
<keyword id="KW-0689">Ribosomal protein</keyword>
<accession>Q5SPH9</accession>
<reference key="1">
    <citation type="journal article" date="2013" name="Nature">
        <title>The zebrafish reference genome sequence and its relationship to the human genome.</title>
        <authorList>
            <person name="Howe K."/>
            <person name="Clark M.D."/>
            <person name="Torroja C.F."/>
            <person name="Torrance J."/>
            <person name="Berthelot C."/>
            <person name="Muffato M."/>
            <person name="Collins J.E."/>
            <person name="Humphray S."/>
            <person name="McLaren K."/>
            <person name="Matthews L."/>
            <person name="McLaren S."/>
            <person name="Sealy I."/>
            <person name="Caccamo M."/>
            <person name="Churcher C."/>
            <person name="Scott C."/>
            <person name="Barrett J.C."/>
            <person name="Koch R."/>
            <person name="Rauch G.J."/>
            <person name="White S."/>
            <person name="Chow W."/>
            <person name="Kilian B."/>
            <person name="Quintais L.T."/>
            <person name="Guerra-Assuncao J.A."/>
            <person name="Zhou Y."/>
            <person name="Gu Y."/>
            <person name="Yen J."/>
            <person name="Vogel J.H."/>
            <person name="Eyre T."/>
            <person name="Redmond S."/>
            <person name="Banerjee R."/>
            <person name="Chi J."/>
            <person name="Fu B."/>
            <person name="Langley E."/>
            <person name="Maguire S.F."/>
            <person name="Laird G.K."/>
            <person name="Lloyd D."/>
            <person name="Kenyon E."/>
            <person name="Donaldson S."/>
            <person name="Sehra H."/>
            <person name="Almeida-King J."/>
            <person name="Loveland J."/>
            <person name="Trevanion S."/>
            <person name="Jones M."/>
            <person name="Quail M."/>
            <person name="Willey D."/>
            <person name="Hunt A."/>
            <person name="Burton J."/>
            <person name="Sims S."/>
            <person name="McLay K."/>
            <person name="Plumb B."/>
            <person name="Davis J."/>
            <person name="Clee C."/>
            <person name="Oliver K."/>
            <person name="Clark R."/>
            <person name="Riddle C."/>
            <person name="Elliot D."/>
            <person name="Threadgold G."/>
            <person name="Harden G."/>
            <person name="Ware D."/>
            <person name="Begum S."/>
            <person name="Mortimore B."/>
            <person name="Kerry G."/>
            <person name="Heath P."/>
            <person name="Phillimore B."/>
            <person name="Tracey A."/>
            <person name="Corby N."/>
            <person name="Dunn M."/>
            <person name="Johnson C."/>
            <person name="Wood J."/>
            <person name="Clark S."/>
            <person name="Pelan S."/>
            <person name="Griffiths G."/>
            <person name="Smith M."/>
            <person name="Glithero R."/>
            <person name="Howden P."/>
            <person name="Barker N."/>
            <person name="Lloyd C."/>
            <person name="Stevens C."/>
            <person name="Harley J."/>
            <person name="Holt K."/>
            <person name="Panagiotidis G."/>
            <person name="Lovell J."/>
            <person name="Beasley H."/>
            <person name="Henderson C."/>
            <person name="Gordon D."/>
            <person name="Auger K."/>
            <person name="Wright D."/>
            <person name="Collins J."/>
            <person name="Raisen C."/>
            <person name="Dyer L."/>
            <person name="Leung K."/>
            <person name="Robertson L."/>
            <person name="Ambridge K."/>
            <person name="Leongamornlert D."/>
            <person name="McGuire S."/>
            <person name="Gilderthorp R."/>
            <person name="Griffiths C."/>
            <person name="Manthravadi D."/>
            <person name="Nichol S."/>
            <person name="Barker G."/>
            <person name="Whitehead S."/>
            <person name="Kay M."/>
            <person name="Brown J."/>
            <person name="Murnane C."/>
            <person name="Gray E."/>
            <person name="Humphries M."/>
            <person name="Sycamore N."/>
            <person name="Barker D."/>
            <person name="Saunders D."/>
            <person name="Wallis J."/>
            <person name="Babbage A."/>
            <person name="Hammond S."/>
            <person name="Mashreghi-Mohammadi M."/>
            <person name="Barr L."/>
            <person name="Martin S."/>
            <person name="Wray P."/>
            <person name="Ellington A."/>
            <person name="Matthews N."/>
            <person name="Ellwood M."/>
            <person name="Woodmansey R."/>
            <person name="Clark G."/>
            <person name="Cooper J."/>
            <person name="Tromans A."/>
            <person name="Grafham D."/>
            <person name="Skuce C."/>
            <person name="Pandian R."/>
            <person name="Andrews R."/>
            <person name="Harrison E."/>
            <person name="Kimberley A."/>
            <person name="Garnett J."/>
            <person name="Fosker N."/>
            <person name="Hall R."/>
            <person name="Garner P."/>
            <person name="Kelly D."/>
            <person name="Bird C."/>
            <person name="Palmer S."/>
            <person name="Gehring I."/>
            <person name="Berger A."/>
            <person name="Dooley C.M."/>
            <person name="Ersan-Urun Z."/>
            <person name="Eser C."/>
            <person name="Geiger H."/>
            <person name="Geisler M."/>
            <person name="Karotki L."/>
            <person name="Kirn A."/>
            <person name="Konantz J."/>
            <person name="Konantz M."/>
            <person name="Oberlander M."/>
            <person name="Rudolph-Geiger S."/>
            <person name="Teucke M."/>
            <person name="Lanz C."/>
            <person name="Raddatz G."/>
            <person name="Osoegawa K."/>
            <person name="Zhu B."/>
            <person name="Rapp A."/>
            <person name="Widaa S."/>
            <person name="Langford C."/>
            <person name="Yang F."/>
            <person name="Schuster S.C."/>
            <person name="Carter N.P."/>
            <person name="Harrow J."/>
            <person name="Ning Z."/>
            <person name="Herrero J."/>
            <person name="Searle S.M."/>
            <person name="Enright A."/>
            <person name="Geisler R."/>
            <person name="Plasterk R.H."/>
            <person name="Lee C."/>
            <person name="Westerfield M."/>
            <person name="de Jong P.J."/>
            <person name="Zon L.I."/>
            <person name="Postlethwait J.H."/>
            <person name="Nusslein-Volhard C."/>
            <person name="Hubbard T.J."/>
            <person name="Roest Crollius H."/>
            <person name="Rogers J."/>
            <person name="Stemple D.L."/>
        </authorList>
    </citation>
    <scope>NUCLEOTIDE SEQUENCE [LARGE SCALE GENOMIC DNA]</scope>
    <source>
        <strain>Tuebingen</strain>
    </source>
</reference>
<gene>
    <name type="primary">mrps10</name>
    <name type="ORF">im:6911513</name>
    <name type="ORF">si:ch211-51e12.6</name>
</gene>
<protein>
    <recommendedName>
        <fullName evidence="2">Small ribosomal subunit protein uS10m</fullName>
    </recommendedName>
    <alternativeName>
        <fullName evidence="2">28S ribosomal protein S10, mitochondrial</fullName>
        <shortName>MRP-S10</shortName>
        <shortName>S10mt</shortName>
    </alternativeName>
</protein>
<sequence>MAASMANFRTLRVLSKIFHGHFTAASAVQHHTACPRLVHTVSVFSPPSPAITESEEPDTLYQRLSVQVKGHDRAVLDSYEFFATLAAKELGLSLEKVFEPPKHIDKLTLLKSRHIFKKHRVQYEMRTHYRCIQISRITGSSARVYLEYIQRNLPEGVAMEVTKTAMEKIPEHIQKPLWDDNKPEASG</sequence>
<dbReference type="EMBL" id="AL928834">
    <property type="protein sequence ID" value="CAI12016.1"/>
    <property type="molecule type" value="Genomic_DNA"/>
</dbReference>
<dbReference type="SMR" id="Q5SPH9"/>
<dbReference type="FunCoup" id="Q5SPH9">
    <property type="interactions" value="409"/>
</dbReference>
<dbReference type="STRING" id="7955.ENSDARP00000067487"/>
<dbReference type="PaxDb" id="7955-ENSDARP00000067487"/>
<dbReference type="PeptideAtlas" id="Q5SPH9"/>
<dbReference type="AGR" id="ZFIN:ZDB-GENE-040914-39"/>
<dbReference type="ZFIN" id="ZDB-GENE-040914-39">
    <property type="gene designation" value="mrps10"/>
</dbReference>
<dbReference type="eggNOG" id="KOG3321">
    <property type="taxonomic scope" value="Eukaryota"/>
</dbReference>
<dbReference type="InParanoid" id="Q5SPH9"/>
<dbReference type="PhylomeDB" id="Q5SPH9"/>
<dbReference type="Reactome" id="R-DRE-5389840">
    <property type="pathway name" value="Mitochondrial translation elongation"/>
</dbReference>
<dbReference type="Reactome" id="R-DRE-5419276">
    <property type="pathway name" value="Mitochondrial translation termination"/>
</dbReference>
<dbReference type="PRO" id="PR:Q5SPH9"/>
<dbReference type="Proteomes" id="UP000000437">
    <property type="component" value="Unplaced"/>
</dbReference>
<dbReference type="GO" id="GO:0005763">
    <property type="term" value="C:mitochondrial small ribosomal subunit"/>
    <property type="evidence" value="ECO:0000250"/>
    <property type="project" value="UniProtKB"/>
</dbReference>
<dbReference type="GO" id="GO:0005739">
    <property type="term" value="C:mitochondrion"/>
    <property type="evidence" value="ECO:0000318"/>
    <property type="project" value="GO_Central"/>
</dbReference>
<dbReference type="GO" id="GO:0003735">
    <property type="term" value="F:structural constituent of ribosome"/>
    <property type="evidence" value="ECO:0007669"/>
    <property type="project" value="InterPro"/>
</dbReference>
<dbReference type="GO" id="GO:0006412">
    <property type="term" value="P:translation"/>
    <property type="evidence" value="ECO:0007669"/>
    <property type="project" value="InterPro"/>
</dbReference>
<dbReference type="FunFam" id="3.30.70.600:FF:000005">
    <property type="entry name" value="28S ribosomal protein S10, mitochondrial"/>
    <property type="match status" value="1"/>
</dbReference>
<dbReference type="Gene3D" id="3.30.70.600">
    <property type="entry name" value="Ribosomal protein S10 domain"/>
    <property type="match status" value="1"/>
</dbReference>
<dbReference type="HAMAP" id="MF_00508">
    <property type="entry name" value="Ribosomal_uS10"/>
    <property type="match status" value="1"/>
</dbReference>
<dbReference type="InterPro" id="IPR001848">
    <property type="entry name" value="Ribosomal_uS10"/>
</dbReference>
<dbReference type="InterPro" id="IPR027486">
    <property type="entry name" value="Ribosomal_uS10_dom"/>
</dbReference>
<dbReference type="InterPro" id="IPR036838">
    <property type="entry name" value="Ribosomal_uS10_dom_sf"/>
</dbReference>
<dbReference type="InterPro" id="IPR040055">
    <property type="entry name" value="Ribosomal_uS10m"/>
</dbReference>
<dbReference type="PANTHER" id="PTHR13334">
    <property type="entry name" value="MITOCHONDRIAL 28S RIBOSOMAL PROTEIN S10"/>
    <property type="match status" value="1"/>
</dbReference>
<dbReference type="PANTHER" id="PTHR13334:SF4">
    <property type="entry name" value="SMALL RIBOSOMAL SUBUNIT PROTEIN US10M"/>
    <property type="match status" value="1"/>
</dbReference>
<dbReference type="Pfam" id="PF00338">
    <property type="entry name" value="Ribosomal_S10"/>
    <property type="match status" value="1"/>
</dbReference>
<dbReference type="SMART" id="SM01403">
    <property type="entry name" value="Ribosomal_S10"/>
    <property type="match status" value="1"/>
</dbReference>
<dbReference type="SUPFAM" id="SSF54999">
    <property type="entry name" value="Ribosomal protein S10"/>
    <property type="match status" value="1"/>
</dbReference>
<proteinExistence type="inferred from homology"/>
<feature type="chain" id="PRO_0000146679" description="Small ribosomal subunit protein uS10m">
    <location>
        <begin position="1"/>
        <end position="187"/>
    </location>
</feature>